<proteinExistence type="inferred from homology"/>
<protein>
    <recommendedName>
        <fullName evidence="1">Deoxyuridine 5'-triphosphate nucleotidohydrolase</fullName>
        <shortName evidence="1">dUTPase</shortName>
        <ecNumber evidence="1">3.6.1.23</ecNumber>
    </recommendedName>
    <alternativeName>
        <fullName evidence="1">dUTP pyrophosphatase</fullName>
    </alternativeName>
</protein>
<organism>
    <name type="scientific">Human herpesvirus 6A (strain GS)</name>
    <name type="common">HHV-6 variant A</name>
    <name type="synonym">Human B lymphotropic virus</name>
    <dbReference type="NCBI Taxonomy" id="10369"/>
    <lineage>
        <taxon>Viruses</taxon>
        <taxon>Duplodnaviria</taxon>
        <taxon>Heunggongvirae</taxon>
        <taxon>Peploviricota</taxon>
        <taxon>Herviviricetes</taxon>
        <taxon>Herpesvirales</taxon>
        <taxon>Orthoherpesviridae</taxon>
        <taxon>Betaherpesvirinae</taxon>
        <taxon>Roseolovirus</taxon>
        <taxon>Roseolovirus humanbeta6a</taxon>
        <taxon>Human betaherpesvirus 6A</taxon>
    </lineage>
</organism>
<dbReference type="EC" id="3.6.1.23" evidence="1"/>
<dbReference type="EMBL" id="S57509">
    <property type="protein sequence ID" value="AAB19782.1"/>
    <property type="molecule type" value="Genomic_DNA"/>
</dbReference>
<dbReference type="PIR" id="D40511">
    <property type="entry name" value="D40511"/>
</dbReference>
<dbReference type="SMR" id="P30007"/>
<dbReference type="BRENDA" id="3.6.1.23">
    <property type="organism ID" value="14280"/>
</dbReference>
<dbReference type="GO" id="GO:0004170">
    <property type="term" value="F:dUTP diphosphatase activity"/>
    <property type="evidence" value="ECO:0007669"/>
    <property type="project" value="UniProtKB-EC"/>
</dbReference>
<dbReference type="GO" id="GO:0046872">
    <property type="term" value="F:metal ion binding"/>
    <property type="evidence" value="ECO:0007669"/>
    <property type="project" value="UniProtKB-KW"/>
</dbReference>
<dbReference type="GO" id="GO:0046080">
    <property type="term" value="P:dUTP metabolic process"/>
    <property type="evidence" value="ECO:0007669"/>
    <property type="project" value="InterPro"/>
</dbReference>
<dbReference type="Gene3D" id="2.70.40.10">
    <property type="match status" value="2"/>
</dbReference>
<dbReference type="HAMAP" id="MF_04031">
    <property type="entry name" value="HSV_DUT"/>
    <property type="match status" value="1"/>
</dbReference>
<dbReference type="InterPro" id="IPR029054">
    <property type="entry name" value="dUTPase-like"/>
</dbReference>
<dbReference type="InterPro" id="IPR036157">
    <property type="entry name" value="dUTPase-like_sf"/>
</dbReference>
<dbReference type="InterPro" id="IPR034745">
    <property type="entry name" value="HSV_DUT"/>
</dbReference>
<dbReference type="Pfam" id="PF00692">
    <property type="entry name" value="dUTPase"/>
    <property type="match status" value="1"/>
</dbReference>
<dbReference type="SUPFAM" id="SSF51283">
    <property type="entry name" value="dUTPase-like"/>
    <property type="match status" value="2"/>
</dbReference>
<comment type="function">
    <text evidence="1">Involved in nucleotide metabolism: produces dUMP, the immediate precursor of thymidine nucleotides and decreases the intracellular concentration of dUTP to avoid uracil incorporation into viral DNA.</text>
</comment>
<comment type="catalytic activity">
    <reaction evidence="1">
        <text>dUTP + H2O = dUMP + diphosphate + H(+)</text>
        <dbReference type="Rhea" id="RHEA:10248"/>
        <dbReference type="ChEBI" id="CHEBI:15377"/>
        <dbReference type="ChEBI" id="CHEBI:15378"/>
        <dbReference type="ChEBI" id="CHEBI:33019"/>
        <dbReference type="ChEBI" id="CHEBI:61555"/>
        <dbReference type="ChEBI" id="CHEBI:246422"/>
        <dbReference type="EC" id="3.6.1.23"/>
    </reaction>
</comment>
<comment type="cofactor">
    <cofactor evidence="1">
        <name>Mg(2+)</name>
        <dbReference type="ChEBI" id="CHEBI:18420"/>
    </cofactor>
</comment>
<comment type="similarity">
    <text evidence="1">Belongs to the dUTPase family.</text>
</comment>
<gene>
    <name evidence="1" type="primary">DUT</name>
    <name type="ordered locus">U45</name>
</gene>
<name>DUT_HHV6G</name>
<accession>P30007</accession>
<reference key="1">
    <citation type="journal article" date="1991" name="J. Virol.">
        <title>Identification of the human herpesvirus 6 glycoprotein H and putative large tegument protein genes.</title>
        <authorList>
            <person name="Josephs S.F."/>
            <person name="Ablashi D.V."/>
            <person name="Salahuddin S.Z."/>
            <person name="Jagodzinski L.L."/>
            <person name="Wong-Staal F."/>
            <person name="Gallo R.C."/>
        </authorList>
    </citation>
    <scope>NUCLEOTIDE SEQUENCE [GENOMIC DNA]</scope>
</reference>
<keyword id="KW-0378">Hydrolase</keyword>
<keyword id="KW-0460">Magnesium</keyword>
<keyword id="KW-0479">Metal-binding</keyword>
<keyword id="KW-0546">Nucleotide metabolism</keyword>
<feature type="chain" id="PRO_0000182958" description="Deoxyuridine 5'-triphosphate nucleotidohydrolase">
    <location>
        <begin position="1"/>
        <end position="376"/>
    </location>
</feature>
<evidence type="ECO:0000255" key="1">
    <source>
        <dbReference type="HAMAP-Rule" id="MF_04031"/>
    </source>
</evidence>
<organismHost>
    <name type="scientific">Homo sapiens</name>
    <name type="common">Human</name>
    <dbReference type="NCBI Taxonomy" id="9606"/>
</organismHost>
<sequence length="376" mass="43408">MYSAISEKISETITLQRQTSSRYIEFFVFRNVDINELWTTDISEDKTHDVWPAVNKKSFKKFLENELTSYQRPIPLLGIPQNGTVSKTCKKEKQRETDCVNYERKHGNPVTFYPRHRAKRNANTDTCISEEPSILVSHHRNSKMDVFMDTNKITLVNRELIWVPHDQVRIVKLDISLYIPDGFFGVITGHSNDVFCECVTEIITDETDISVFLMNLSEHSLMLLPGDVEFSINFLPCYIPEPWEMINLSPPEFAIFHLKASREFIAKPNSYTIQYFDAMYVCADELKALMIPSKEIAKLGLLIETYIWNKDTIPSIKIFNSTRKTIYIPTGICIARIIFTCGHFCLSLMPERAINRLQVLDANSSFLFHYATSNNA</sequence>